<sequence length="216" mass="25003">MKLNVNPTRMELTKLKKRLTTATRGHKLLKDKQDELMRRFIGMIKKNNELRKDVEKELEGSFKDFLMASAVMSPEFLEEAVAYPKESISVDVKKQNIMSVNVPVFDFKRKLEGDKGSIFPYGFANTSAELDGAIEKLYGILPKLLELAKVEKACQLMADEIEKTRRRVNALEYMTIPQLEETIKFIQMKLDENERSTVTRLMKIKSMMEEKQSNMV</sequence>
<proteinExistence type="inferred from homology"/>
<protein>
    <recommendedName>
        <fullName evidence="1">V-type ATP synthase subunit D</fullName>
    </recommendedName>
    <alternativeName>
        <fullName evidence="1">V-ATPase subunit D</fullName>
    </alternativeName>
</protein>
<evidence type="ECO:0000255" key="1">
    <source>
        <dbReference type="HAMAP-Rule" id="MF_00271"/>
    </source>
</evidence>
<name>VATD_CLOB1</name>
<dbReference type="EMBL" id="CP000726">
    <property type="protein sequence ID" value="ABS32654.1"/>
    <property type="molecule type" value="Genomic_DNA"/>
</dbReference>
<dbReference type="RefSeq" id="WP_003359170.1">
    <property type="nucleotide sequence ID" value="NC_009697.1"/>
</dbReference>
<dbReference type="SMR" id="A7FWQ5"/>
<dbReference type="KEGG" id="cba:CLB_2565"/>
<dbReference type="HOGENOM" id="CLU_069688_2_1_9"/>
<dbReference type="GO" id="GO:0005524">
    <property type="term" value="F:ATP binding"/>
    <property type="evidence" value="ECO:0007669"/>
    <property type="project" value="UniProtKB-UniRule"/>
</dbReference>
<dbReference type="GO" id="GO:0046933">
    <property type="term" value="F:proton-transporting ATP synthase activity, rotational mechanism"/>
    <property type="evidence" value="ECO:0007669"/>
    <property type="project" value="UniProtKB-UniRule"/>
</dbReference>
<dbReference type="GO" id="GO:0046961">
    <property type="term" value="F:proton-transporting ATPase activity, rotational mechanism"/>
    <property type="evidence" value="ECO:0007669"/>
    <property type="project" value="InterPro"/>
</dbReference>
<dbReference type="GO" id="GO:0042777">
    <property type="term" value="P:proton motive force-driven plasma membrane ATP synthesis"/>
    <property type="evidence" value="ECO:0007669"/>
    <property type="project" value="UniProtKB-UniRule"/>
</dbReference>
<dbReference type="FunFam" id="1.10.287.3240:FF:000007">
    <property type="entry name" value="V-type ATP synthase subunit D"/>
    <property type="match status" value="1"/>
</dbReference>
<dbReference type="Gene3D" id="1.10.287.3240">
    <property type="match status" value="1"/>
</dbReference>
<dbReference type="HAMAP" id="MF_00271">
    <property type="entry name" value="ATP_synth_D_arch"/>
    <property type="match status" value="1"/>
</dbReference>
<dbReference type="InterPro" id="IPR002699">
    <property type="entry name" value="V_ATPase_D"/>
</dbReference>
<dbReference type="NCBIfam" id="NF001543">
    <property type="entry name" value="PRK00373.1-2"/>
    <property type="match status" value="1"/>
</dbReference>
<dbReference type="NCBIfam" id="TIGR00309">
    <property type="entry name" value="V_ATPase_subD"/>
    <property type="match status" value="1"/>
</dbReference>
<dbReference type="PANTHER" id="PTHR11671">
    <property type="entry name" value="V-TYPE ATP SYNTHASE SUBUNIT D"/>
    <property type="match status" value="1"/>
</dbReference>
<dbReference type="Pfam" id="PF01813">
    <property type="entry name" value="ATP-synt_D"/>
    <property type="match status" value="1"/>
</dbReference>
<keyword id="KW-0066">ATP synthesis</keyword>
<keyword id="KW-0375">Hydrogen ion transport</keyword>
<keyword id="KW-0406">Ion transport</keyword>
<keyword id="KW-0813">Transport</keyword>
<gene>
    <name evidence="1" type="primary">atpD</name>
    <name type="ordered locus">CLB_2565</name>
</gene>
<organism>
    <name type="scientific">Clostridium botulinum (strain ATCC 19397 / Type A)</name>
    <dbReference type="NCBI Taxonomy" id="441770"/>
    <lineage>
        <taxon>Bacteria</taxon>
        <taxon>Bacillati</taxon>
        <taxon>Bacillota</taxon>
        <taxon>Clostridia</taxon>
        <taxon>Eubacteriales</taxon>
        <taxon>Clostridiaceae</taxon>
        <taxon>Clostridium</taxon>
    </lineage>
</organism>
<feature type="chain" id="PRO_1000059151" description="V-type ATP synthase subunit D">
    <location>
        <begin position="1"/>
        <end position="216"/>
    </location>
</feature>
<comment type="function">
    <text evidence="1">Produces ATP from ADP in the presence of a proton gradient across the membrane.</text>
</comment>
<comment type="similarity">
    <text evidence="1">Belongs to the V-ATPase D subunit family.</text>
</comment>
<accession>A7FWQ5</accession>
<reference key="1">
    <citation type="journal article" date="2007" name="PLoS ONE">
        <title>Analysis of the neurotoxin complex genes in Clostridium botulinum A1-A4 and B1 strains: BoNT/A3, /Ba4 and /B1 clusters are located within plasmids.</title>
        <authorList>
            <person name="Smith T.J."/>
            <person name="Hill K.K."/>
            <person name="Foley B.T."/>
            <person name="Detter J.C."/>
            <person name="Munk A.C."/>
            <person name="Bruce D.C."/>
            <person name="Doggett N.A."/>
            <person name="Smith L.A."/>
            <person name="Marks J.D."/>
            <person name="Xie G."/>
            <person name="Brettin T.S."/>
        </authorList>
    </citation>
    <scope>NUCLEOTIDE SEQUENCE [LARGE SCALE GENOMIC DNA]</scope>
    <source>
        <strain>ATCC 19397 / Type A</strain>
    </source>
</reference>